<accession>Q8BWY4</accession>
<accession>Q8CHU7</accession>
<evidence type="ECO:0000250" key="1">
    <source>
        <dbReference type="UniProtKB" id="A4D2B0"/>
    </source>
</evidence>
<evidence type="ECO:0000305" key="2"/>
<evidence type="ECO:0000312" key="3">
    <source>
        <dbReference type="MGI" id="MGI:2679717"/>
    </source>
</evidence>
<organism>
    <name type="scientific">Mus musculus</name>
    <name type="common">Mouse</name>
    <dbReference type="NCBI Taxonomy" id="10090"/>
    <lineage>
        <taxon>Eukaryota</taxon>
        <taxon>Metazoa</taxon>
        <taxon>Chordata</taxon>
        <taxon>Craniata</taxon>
        <taxon>Vertebrata</taxon>
        <taxon>Euteleostomi</taxon>
        <taxon>Mammalia</taxon>
        <taxon>Eutheria</taxon>
        <taxon>Euarchontoglires</taxon>
        <taxon>Glires</taxon>
        <taxon>Rodentia</taxon>
        <taxon>Myomorpha</taxon>
        <taxon>Muroidea</taxon>
        <taxon>Muridae</taxon>
        <taxon>Murinae</taxon>
        <taxon>Mus</taxon>
        <taxon>Mus</taxon>
    </lineage>
</organism>
<feature type="chain" id="PRO_0000337028" description="Metallo-beta-lactamase domain-containing protein 1">
    <location>
        <begin position="1"/>
        <end position="260"/>
    </location>
</feature>
<feature type="binding site" evidence="1">
    <location>
        <position position="118"/>
    </location>
    <ligand>
        <name>Zn(2+)</name>
        <dbReference type="ChEBI" id="CHEBI:29105"/>
        <label>1</label>
    </ligand>
</feature>
<feature type="binding site" evidence="1">
    <location>
        <position position="120"/>
    </location>
    <ligand>
        <name>Zn(2+)</name>
        <dbReference type="ChEBI" id="CHEBI:29105"/>
        <label>1</label>
    </ligand>
</feature>
<feature type="binding site" evidence="1">
    <location>
        <position position="122"/>
    </location>
    <ligand>
        <name>Zn(2+)</name>
        <dbReference type="ChEBI" id="CHEBI:29105"/>
        <label>2</label>
    </ligand>
</feature>
<feature type="binding site" evidence="1">
    <location>
        <position position="123"/>
    </location>
    <ligand>
        <name>Zn(2+)</name>
        <dbReference type="ChEBI" id="CHEBI:29105"/>
        <label>2</label>
    </ligand>
</feature>
<feature type="binding site" evidence="1">
    <location>
        <position position="173"/>
    </location>
    <ligand>
        <name>Zn(2+)</name>
        <dbReference type="ChEBI" id="CHEBI:29105"/>
        <label>1</label>
    </ligand>
</feature>
<feature type="binding site" evidence="1">
    <location>
        <position position="196"/>
    </location>
    <ligand>
        <name>Zn(2+)</name>
        <dbReference type="ChEBI" id="CHEBI:29105"/>
        <label>1</label>
    </ligand>
</feature>
<feature type="binding site" evidence="1">
    <location>
        <position position="196"/>
    </location>
    <ligand>
        <name>Zn(2+)</name>
        <dbReference type="ChEBI" id="CHEBI:29105"/>
        <label>2</label>
    </ligand>
</feature>
<feature type="binding site" evidence="1">
    <location>
        <position position="235"/>
    </location>
    <ligand>
        <name>Zn(2+)</name>
        <dbReference type="ChEBI" id="CHEBI:29105"/>
        <label>2</label>
    </ligand>
</feature>
<feature type="sequence conflict" description="In Ref. 2; AAH38925." evidence="2" ref="2">
    <original>S</original>
    <variation>T</variation>
    <location>
        <position position="19"/>
    </location>
</feature>
<name>MBLC1_MOUSE</name>
<keyword id="KW-0963">Cytoplasm</keyword>
<keyword id="KW-0378">Hydrolase</keyword>
<keyword id="KW-0479">Metal-binding</keyword>
<keyword id="KW-0539">Nucleus</keyword>
<keyword id="KW-1185">Reference proteome</keyword>
<keyword id="KW-0862">Zinc</keyword>
<reference key="1">
    <citation type="journal article" date="2005" name="Science">
        <title>The transcriptional landscape of the mammalian genome.</title>
        <authorList>
            <person name="Carninci P."/>
            <person name="Kasukawa T."/>
            <person name="Katayama S."/>
            <person name="Gough J."/>
            <person name="Frith M.C."/>
            <person name="Maeda N."/>
            <person name="Oyama R."/>
            <person name="Ravasi T."/>
            <person name="Lenhard B."/>
            <person name="Wells C."/>
            <person name="Kodzius R."/>
            <person name="Shimokawa K."/>
            <person name="Bajic V.B."/>
            <person name="Brenner S.E."/>
            <person name="Batalov S."/>
            <person name="Forrest A.R."/>
            <person name="Zavolan M."/>
            <person name="Davis M.J."/>
            <person name="Wilming L.G."/>
            <person name="Aidinis V."/>
            <person name="Allen J.E."/>
            <person name="Ambesi-Impiombato A."/>
            <person name="Apweiler R."/>
            <person name="Aturaliya R.N."/>
            <person name="Bailey T.L."/>
            <person name="Bansal M."/>
            <person name="Baxter L."/>
            <person name="Beisel K.W."/>
            <person name="Bersano T."/>
            <person name="Bono H."/>
            <person name="Chalk A.M."/>
            <person name="Chiu K.P."/>
            <person name="Choudhary V."/>
            <person name="Christoffels A."/>
            <person name="Clutterbuck D.R."/>
            <person name="Crowe M.L."/>
            <person name="Dalla E."/>
            <person name="Dalrymple B.P."/>
            <person name="de Bono B."/>
            <person name="Della Gatta G."/>
            <person name="di Bernardo D."/>
            <person name="Down T."/>
            <person name="Engstrom P."/>
            <person name="Fagiolini M."/>
            <person name="Faulkner G."/>
            <person name="Fletcher C.F."/>
            <person name="Fukushima T."/>
            <person name="Furuno M."/>
            <person name="Futaki S."/>
            <person name="Gariboldi M."/>
            <person name="Georgii-Hemming P."/>
            <person name="Gingeras T.R."/>
            <person name="Gojobori T."/>
            <person name="Green R.E."/>
            <person name="Gustincich S."/>
            <person name="Harbers M."/>
            <person name="Hayashi Y."/>
            <person name="Hensch T.K."/>
            <person name="Hirokawa N."/>
            <person name="Hill D."/>
            <person name="Huminiecki L."/>
            <person name="Iacono M."/>
            <person name="Ikeo K."/>
            <person name="Iwama A."/>
            <person name="Ishikawa T."/>
            <person name="Jakt M."/>
            <person name="Kanapin A."/>
            <person name="Katoh M."/>
            <person name="Kawasawa Y."/>
            <person name="Kelso J."/>
            <person name="Kitamura H."/>
            <person name="Kitano H."/>
            <person name="Kollias G."/>
            <person name="Krishnan S.P."/>
            <person name="Kruger A."/>
            <person name="Kummerfeld S.K."/>
            <person name="Kurochkin I.V."/>
            <person name="Lareau L.F."/>
            <person name="Lazarevic D."/>
            <person name="Lipovich L."/>
            <person name="Liu J."/>
            <person name="Liuni S."/>
            <person name="McWilliam S."/>
            <person name="Madan Babu M."/>
            <person name="Madera M."/>
            <person name="Marchionni L."/>
            <person name="Matsuda H."/>
            <person name="Matsuzawa S."/>
            <person name="Miki H."/>
            <person name="Mignone F."/>
            <person name="Miyake S."/>
            <person name="Morris K."/>
            <person name="Mottagui-Tabar S."/>
            <person name="Mulder N."/>
            <person name="Nakano N."/>
            <person name="Nakauchi H."/>
            <person name="Ng P."/>
            <person name="Nilsson R."/>
            <person name="Nishiguchi S."/>
            <person name="Nishikawa S."/>
            <person name="Nori F."/>
            <person name="Ohara O."/>
            <person name="Okazaki Y."/>
            <person name="Orlando V."/>
            <person name="Pang K.C."/>
            <person name="Pavan W.J."/>
            <person name="Pavesi G."/>
            <person name="Pesole G."/>
            <person name="Petrovsky N."/>
            <person name="Piazza S."/>
            <person name="Reed J."/>
            <person name="Reid J.F."/>
            <person name="Ring B.Z."/>
            <person name="Ringwald M."/>
            <person name="Rost B."/>
            <person name="Ruan Y."/>
            <person name="Salzberg S.L."/>
            <person name="Sandelin A."/>
            <person name="Schneider C."/>
            <person name="Schoenbach C."/>
            <person name="Sekiguchi K."/>
            <person name="Semple C.A."/>
            <person name="Seno S."/>
            <person name="Sessa L."/>
            <person name="Sheng Y."/>
            <person name="Shibata Y."/>
            <person name="Shimada H."/>
            <person name="Shimada K."/>
            <person name="Silva D."/>
            <person name="Sinclair B."/>
            <person name="Sperling S."/>
            <person name="Stupka E."/>
            <person name="Sugiura K."/>
            <person name="Sultana R."/>
            <person name="Takenaka Y."/>
            <person name="Taki K."/>
            <person name="Tammoja K."/>
            <person name="Tan S.L."/>
            <person name="Tang S."/>
            <person name="Taylor M.S."/>
            <person name="Tegner J."/>
            <person name="Teichmann S.A."/>
            <person name="Ueda H.R."/>
            <person name="van Nimwegen E."/>
            <person name="Verardo R."/>
            <person name="Wei C.L."/>
            <person name="Yagi K."/>
            <person name="Yamanishi H."/>
            <person name="Zabarovsky E."/>
            <person name="Zhu S."/>
            <person name="Zimmer A."/>
            <person name="Hide W."/>
            <person name="Bult C."/>
            <person name="Grimmond S.M."/>
            <person name="Teasdale R.D."/>
            <person name="Liu E.T."/>
            <person name="Brusic V."/>
            <person name="Quackenbush J."/>
            <person name="Wahlestedt C."/>
            <person name="Mattick J.S."/>
            <person name="Hume D.A."/>
            <person name="Kai C."/>
            <person name="Sasaki D."/>
            <person name="Tomaru Y."/>
            <person name="Fukuda S."/>
            <person name="Kanamori-Katayama M."/>
            <person name="Suzuki M."/>
            <person name="Aoki J."/>
            <person name="Arakawa T."/>
            <person name="Iida J."/>
            <person name="Imamura K."/>
            <person name="Itoh M."/>
            <person name="Kato T."/>
            <person name="Kawaji H."/>
            <person name="Kawagashira N."/>
            <person name="Kawashima T."/>
            <person name="Kojima M."/>
            <person name="Kondo S."/>
            <person name="Konno H."/>
            <person name="Nakano K."/>
            <person name="Ninomiya N."/>
            <person name="Nishio T."/>
            <person name="Okada M."/>
            <person name="Plessy C."/>
            <person name="Shibata K."/>
            <person name="Shiraki T."/>
            <person name="Suzuki S."/>
            <person name="Tagami M."/>
            <person name="Waki K."/>
            <person name="Watahiki A."/>
            <person name="Okamura-Oho Y."/>
            <person name="Suzuki H."/>
            <person name="Kawai J."/>
            <person name="Hayashizaki Y."/>
        </authorList>
    </citation>
    <scope>NUCLEOTIDE SEQUENCE [LARGE SCALE MRNA]</scope>
    <source>
        <strain>C57BL/6J</strain>
    </source>
</reference>
<reference key="2">
    <citation type="journal article" date="2004" name="Genome Res.">
        <title>The status, quality, and expansion of the NIH full-length cDNA project: the Mammalian Gene Collection (MGC).</title>
        <authorList>
            <consortium name="The MGC Project Team"/>
        </authorList>
    </citation>
    <scope>NUCLEOTIDE SEQUENCE [LARGE SCALE MRNA]</scope>
    <source>
        <strain>FVB/N-3</strain>
        <tissue>Mammary tumor</tissue>
    </source>
</reference>
<reference key="3">
    <citation type="journal article" date="2010" name="Cell">
        <title>A tissue-specific atlas of mouse protein phosphorylation and expression.</title>
        <authorList>
            <person name="Huttlin E.L."/>
            <person name="Jedrychowski M.P."/>
            <person name="Elias J.E."/>
            <person name="Goswami T."/>
            <person name="Rad R."/>
            <person name="Beausoleil S.A."/>
            <person name="Villen J."/>
            <person name="Haas W."/>
            <person name="Sowa M.E."/>
            <person name="Gygi S.P."/>
        </authorList>
    </citation>
    <scope>IDENTIFICATION BY MASS SPECTROMETRY [LARGE SCALE ANALYSIS]</scope>
    <source>
        <tissue>Brain</tissue>
        <tissue>Spleen</tissue>
    </source>
</reference>
<sequence length="260" mass="26923">MNGPVRTEPLHGEIPLLASSGSYSVVVLLRGYAEPQGAGDAVRADGTVTLVLPRGWASDSSRGLAPSADGGSKTALEEAVRGPILVDTGGPWARGALLEALATQGVAPEDVTLVVGTHGHSDHIGNLGLFPEAALLVSHDFCLPEGLYLPHGLCETQPLILGSGLQVWATPGHGGQRDVSVVVEGTSLGTVVVAGDVFERLGDEDSWQALSEDPVAQQRSRERILSVADVVVPGHGAPFRVVRETVKSSEDLICEGKAVA</sequence>
<gene>
    <name evidence="3" type="primary">Mblac1</name>
</gene>
<proteinExistence type="evidence at protein level"/>
<comment type="function">
    <text evidence="1">Endoribonuclease that catalyzes the hydrolysis of histone-coding pre-mRNA 3'-end. Involved in histone pre-mRNA processing during the S-phase of the cell cycle, which is required for entering/progressing through S-phase. Cleaves histone pre-mRNA at a major and a minor cleavage site after the 5'-ACCCA-3' and the 5'-ACCCACA-3' sequence, respectively, and located downstream of the stem-loop. May require the presence of the HDE element located at the histone pre-RNA 3'-end to avoid non-specific cleavage.</text>
</comment>
<comment type="catalytic activity">
    <reaction evidence="1">
        <text>a ribonucleotidyl-ribonucleotide-RNA + H2O = a 3'-end ribonucleotide-RNA + a 5'-end 5'-phospho-ribonucleoside-RNA + H(+)</text>
        <dbReference type="Rhea" id="RHEA:68096"/>
        <dbReference type="Rhea" id="RHEA-COMP:15179"/>
        <dbReference type="Rhea" id="RHEA-COMP:17355"/>
        <dbReference type="Rhea" id="RHEA-COMP:17428"/>
        <dbReference type="ChEBI" id="CHEBI:15377"/>
        <dbReference type="ChEBI" id="CHEBI:15378"/>
        <dbReference type="ChEBI" id="CHEBI:74896"/>
        <dbReference type="ChEBI" id="CHEBI:138282"/>
        <dbReference type="ChEBI" id="CHEBI:173118"/>
    </reaction>
    <physiologicalReaction direction="left-to-right" evidence="1">
        <dbReference type="Rhea" id="RHEA:68097"/>
    </physiologicalReaction>
</comment>
<comment type="cofactor">
    <cofactor evidence="1">
        <name>Zn(2+)</name>
        <dbReference type="ChEBI" id="CHEBI:29105"/>
    </cofactor>
    <text evidence="1">Binds 2 Zn(2+) ions per subunit.</text>
</comment>
<comment type="subunit">
    <text evidence="1">Homodimer.</text>
</comment>
<comment type="subcellular location">
    <subcellularLocation>
        <location evidence="1">Cytoplasm</location>
        <location evidence="1">Cytosol</location>
    </subcellularLocation>
    <subcellularLocation>
        <location evidence="1">Nucleus</location>
    </subcellularLocation>
    <text evidence="1">Localizes in the nucleus during early S-phase of the cell cycle.</text>
</comment>
<comment type="domain">
    <text evidence="1">Contains four of the five characteristic MBL-fold metal-binding motifs, with two waters completing metal coordination.</text>
</comment>
<comment type="similarity">
    <text evidence="2">Belongs to the metallo-beta-lactamase superfamily. Glyoxalase II family.</text>
</comment>
<dbReference type="EC" id="3.1.27.-" evidence="1"/>
<dbReference type="EMBL" id="AK049381">
    <property type="protein sequence ID" value="BAC33723.1"/>
    <property type="molecule type" value="mRNA"/>
</dbReference>
<dbReference type="EMBL" id="BC038925">
    <property type="protein sequence ID" value="AAH38925.1"/>
    <property type="molecule type" value="mRNA"/>
</dbReference>
<dbReference type="CCDS" id="CCDS19796.1"/>
<dbReference type="RefSeq" id="NP_808546.1">
    <property type="nucleotide sequence ID" value="NM_177878.3"/>
</dbReference>
<dbReference type="SMR" id="Q8BWY4"/>
<dbReference type="BioGRID" id="236922">
    <property type="interactions" value="1"/>
</dbReference>
<dbReference type="FunCoup" id="Q8BWY4">
    <property type="interactions" value="1007"/>
</dbReference>
<dbReference type="STRING" id="10090.ENSMUSP00000052869"/>
<dbReference type="PhosphoSitePlus" id="Q8BWY4"/>
<dbReference type="PaxDb" id="10090-ENSMUSP00000052869"/>
<dbReference type="ProteomicsDB" id="293416"/>
<dbReference type="Pumba" id="Q8BWY4"/>
<dbReference type="Antibodypedia" id="71061">
    <property type="antibodies" value="16 antibodies from 9 providers"/>
</dbReference>
<dbReference type="Ensembl" id="ENSMUST00000057773.5">
    <property type="protein sequence ID" value="ENSMUSP00000052869.5"/>
    <property type="gene ID" value="ENSMUSG00000049285.5"/>
</dbReference>
<dbReference type="GeneID" id="330216"/>
<dbReference type="KEGG" id="mmu:330216"/>
<dbReference type="UCSC" id="uc009afa.2">
    <property type="organism name" value="mouse"/>
</dbReference>
<dbReference type="AGR" id="MGI:2679717"/>
<dbReference type="CTD" id="255374"/>
<dbReference type="MGI" id="MGI:2679717">
    <property type="gene designation" value="Mblac1"/>
</dbReference>
<dbReference type="VEuPathDB" id="HostDB:ENSMUSG00000049285"/>
<dbReference type="eggNOG" id="KOG4736">
    <property type="taxonomic scope" value="Eukaryota"/>
</dbReference>
<dbReference type="GeneTree" id="ENSGT00390000016193"/>
<dbReference type="HOGENOM" id="CLU_030571_2_6_1"/>
<dbReference type="InParanoid" id="Q8BWY4"/>
<dbReference type="OMA" id="RHVVCTH"/>
<dbReference type="OrthoDB" id="10250730at2759"/>
<dbReference type="PhylomeDB" id="Q8BWY4"/>
<dbReference type="TreeFam" id="TF316508"/>
<dbReference type="BioGRID-ORCS" id="330216">
    <property type="hits" value="1 hit in 77 CRISPR screens"/>
</dbReference>
<dbReference type="PRO" id="PR:Q8BWY4"/>
<dbReference type="Proteomes" id="UP000000589">
    <property type="component" value="Chromosome 5"/>
</dbReference>
<dbReference type="RNAct" id="Q8BWY4">
    <property type="molecule type" value="protein"/>
</dbReference>
<dbReference type="Bgee" id="ENSMUSG00000049285">
    <property type="expression patterns" value="Expressed in rostral migratory stream and 150 other cell types or tissues"/>
</dbReference>
<dbReference type="GO" id="GO:0005737">
    <property type="term" value="C:cytoplasm"/>
    <property type="evidence" value="ECO:0000250"/>
    <property type="project" value="UniProtKB"/>
</dbReference>
<dbReference type="GO" id="GO:0005829">
    <property type="term" value="C:cytosol"/>
    <property type="evidence" value="ECO:0007669"/>
    <property type="project" value="UniProtKB-SubCell"/>
</dbReference>
<dbReference type="GO" id="GO:0005634">
    <property type="term" value="C:nucleus"/>
    <property type="evidence" value="ECO:0000250"/>
    <property type="project" value="UniProtKB"/>
</dbReference>
<dbReference type="GO" id="GO:0046872">
    <property type="term" value="F:metal ion binding"/>
    <property type="evidence" value="ECO:0000250"/>
    <property type="project" value="UniProtKB"/>
</dbReference>
<dbReference type="GO" id="GO:0004521">
    <property type="term" value="F:RNA endonuclease activity"/>
    <property type="evidence" value="ECO:0000250"/>
    <property type="project" value="UniProtKB"/>
</dbReference>
<dbReference type="GO" id="GO:0008334">
    <property type="term" value="P:histone mRNA metabolic process"/>
    <property type="evidence" value="ECO:0000250"/>
    <property type="project" value="UniProtKB"/>
</dbReference>
<dbReference type="GO" id="GO:0031124">
    <property type="term" value="P:mRNA 3'-end processing"/>
    <property type="evidence" value="ECO:0007669"/>
    <property type="project" value="Ensembl"/>
</dbReference>
<dbReference type="GO" id="GO:1900087">
    <property type="term" value="P:positive regulation of G1/S transition of mitotic cell cycle"/>
    <property type="evidence" value="ECO:0000250"/>
    <property type="project" value="UniProtKB"/>
</dbReference>
<dbReference type="CDD" id="cd07711">
    <property type="entry name" value="MBLAC1-like_MBL-fold"/>
    <property type="match status" value="1"/>
</dbReference>
<dbReference type="Gene3D" id="3.60.15.10">
    <property type="entry name" value="Ribonuclease Z/Hydroxyacylglutathione hydrolase-like"/>
    <property type="match status" value="1"/>
</dbReference>
<dbReference type="InterPro" id="IPR039344">
    <property type="entry name" value="MBLAC1"/>
</dbReference>
<dbReference type="InterPro" id="IPR001279">
    <property type="entry name" value="Metallo-B-lactamas"/>
</dbReference>
<dbReference type="InterPro" id="IPR036866">
    <property type="entry name" value="RibonucZ/Hydroxyglut_hydro"/>
</dbReference>
<dbReference type="PANTHER" id="PTHR23200">
    <property type="entry name" value="METALLO-BETA-LACTAMASE DOMAIN-CONTAINING PROTEIN 1"/>
    <property type="match status" value="1"/>
</dbReference>
<dbReference type="PANTHER" id="PTHR23200:SF48">
    <property type="entry name" value="METALLO-BETA-LACTAMASE DOMAIN-CONTAINING PROTEIN 1"/>
    <property type="match status" value="1"/>
</dbReference>
<dbReference type="Pfam" id="PF00753">
    <property type="entry name" value="Lactamase_B"/>
    <property type="match status" value="1"/>
</dbReference>
<dbReference type="SMART" id="SM00849">
    <property type="entry name" value="Lactamase_B"/>
    <property type="match status" value="1"/>
</dbReference>
<dbReference type="SUPFAM" id="SSF56281">
    <property type="entry name" value="Metallo-hydrolase/oxidoreductase"/>
    <property type="match status" value="1"/>
</dbReference>
<protein>
    <recommendedName>
        <fullName>Metallo-beta-lactamase domain-containing protein 1</fullName>
        <ecNumber evidence="1">3.1.27.-</ecNumber>
    </recommendedName>
    <alternativeName>
        <fullName evidence="1">Endoribonuclease MBLAC1</fullName>
    </alternativeName>
</protein>